<proteinExistence type="inferred from homology"/>
<dbReference type="EC" id="3.6.4.-" evidence="1"/>
<dbReference type="EMBL" id="AE014184">
    <property type="protein sequence ID" value="AAO44366.1"/>
    <property type="molecule type" value="Genomic_DNA"/>
</dbReference>
<dbReference type="RefSeq" id="WP_011102467.1">
    <property type="nucleotide sequence ID" value="NC_004572.3"/>
</dbReference>
<dbReference type="SMR" id="Q83MZ8"/>
<dbReference type="STRING" id="203267.TWT_269"/>
<dbReference type="GeneID" id="67388280"/>
<dbReference type="KEGG" id="twh:TWT_269"/>
<dbReference type="eggNOG" id="COG2255">
    <property type="taxonomic scope" value="Bacteria"/>
</dbReference>
<dbReference type="HOGENOM" id="CLU_055599_1_0_11"/>
<dbReference type="Proteomes" id="UP000002200">
    <property type="component" value="Chromosome"/>
</dbReference>
<dbReference type="GO" id="GO:0005737">
    <property type="term" value="C:cytoplasm"/>
    <property type="evidence" value="ECO:0007669"/>
    <property type="project" value="UniProtKB-SubCell"/>
</dbReference>
<dbReference type="GO" id="GO:0048476">
    <property type="term" value="C:Holliday junction resolvase complex"/>
    <property type="evidence" value="ECO:0007669"/>
    <property type="project" value="UniProtKB-UniRule"/>
</dbReference>
<dbReference type="GO" id="GO:0005524">
    <property type="term" value="F:ATP binding"/>
    <property type="evidence" value="ECO:0007669"/>
    <property type="project" value="UniProtKB-UniRule"/>
</dbReference>
<dbReference type="GO" id="GO:0016887">
    <property type="term" value="F:ATP hydrolysis activity"/>
    <property type="evidence" value="ECO:0007669"/>
    <property type="project" value="InterPro"/>
</dbReference>
<dbReference type="GO" id="GO:0000400">
    <property type="term" value="F:four-way junction DNA binding"/>
    <property type="evidence" value="ECO:0007669"/>
    <property type="project" value="UniProtKB-UniRule"/>
</dbReference>
<dbReference type="GO" id="GO:0009378">
    <property type="term" value="F:four-way junction helicase activity"/>
    <property type="evidence" value="ECO:0007669"/>
    <property type="project" value="InterPro"/>
</dbReference>
<dbReference type="GO" id="GO:0006310">
    <property type="term" value="P:DNA recombination"/>
    <property type="evidence" value="ECO:0007669"/>
    <property type="project" value="UniProtKB-UniRule"/>
</dbReference>
<dbReference type="GO" id="GO:0006281">
    <property type="term" value="P:DNA repair"/>
    <property type="evidence" value="ECO:0007669"/>
    <property type="project" value="UniProtKB-UniRule"/>
</dbReference>
<dbReference type="CDD" id="cd00009">
    <property type="entry name" value="AAA"/>
    <property type="match status" value="1"/>
</dbReference>
<dbReference type="Gene3D" id="1.10.8.60">
    <property type="match status" value="1"/>
</dbReference>
<dbReference type="Gene3D" id="3.40.50.300">
    <property type="entry name" value="P-loop containing nucleotide triphosphate hydrolases"/>
    <property type="match status" value="1"/>
</dbReference>
<dbReference type="Gene3D" id="1.10.10.10">
    <property type="entry name" value="Winged helix-like DNA-binding domain superfamily/Winged helix DNA-binding domain"/>
    <property type="match status" value="1"/>
</dbReference>
<dbReference type="HAMAP" id="MF_00016">
    <property type="entry name" value="DNA_HJ_migration_RuvB"/>
    <property type="match status" value="1"/>
</dbReference>
<dbReference type="InterPro" id="IPR003593">
    <property type="entry name" value="AAA+_ATPase"/>
</dbReference>
<dbReference type="InterPro" id="IPR041445">
    <property type="entry name" value="AAA_lid_4"/>
</dbReference>
<dbReference type="InterPro" id="IPR004605">
    <property type="entry name" value="DNA_helicase_Holl-junc_RuvB"/>
</dbReference>
<dbReference type="InterPro" id="IPR027417">
    <property type="entry name" value="P-loop_NTPase"/>
</dbReference>
<dbReference type="InterPro" id="IPR008824">
    <property type="entry name" value="RuvB-like_N"/>
</dbReference>
<dbReference type="InterPro" id="IPR008823">
    <property type="entry name" value="RuvB_C"/>
</dbReference>
<dbReference type="InterPro" id="IPR036388">
    <property type="entry name" value="WH-like_DNA-bd_sf"/>
</dbReference>
<dbReference type="InterPro" id="IPR036390">
    <property type="entry name" value="WH_DNA-bd_sf"/>
</dbReference>
<dbReference type="NCBIfam" id="NF000868">
    <property type="entry name" value="PRK00080.1"/>
    <property type="match status" value="1"/>
</dbReference>
<dbReference type="NCBIfam" id="TIGR00635">
    <property type="entry name" value="ruvB"/>
    <property type="match status" value="1"/>
</dbReference>
<dbReference type="PANTHER" id="PTHR42848">
    <property type="match status" value="1"/>
</dbReference>
<dbReference type="PANTHER" id="PTHR42848:SF1">
    <property type="entry name" value="HOLLIDAY JUNCTION BRANCH MIGRATION COMPLEX SUBUNIT RUVB"/>
    <property type="match status" value="1"/>
</dbReference>
<dbReference type="Pfam" id="PF17864">
    <property type="entry name" value="AAA_lid_4"/>
    <property type="match status" value="1"/>
</dbReference>
<dbReference type="Pfam" id="PF05491">
    <property type="entry name" value="RuvB_C"/>
    <property type="match status" value="1"/>
</dbReference>
<dbReference type="Pfam" id="PF05496">
    <property type="entry name" value="RuvB_N"/>
    <property type="match status" value="1"/>
</dbReference>
<dbReference type="SMART" id="SM00382">
    <property type="entry name" value="AAA"/>
    <property type="match status" value="1"/>
</dbReference>
<dbReference type="SUPFAM" id="SSF52540">
    <property type="entry name" value="P-loop containing nucleoside triphosphate hydrolases"/>
    <property type="match status" value="1"/>
</dbReference>
<dbReference type="SUPFAM" id="SSF46785">
    <property type="entry name" value="Winged helix' DNA-binding domain"/>
    <property type="match status" value="1"/>
</dbReference>
<gene>
    <name evidence="1" type="primary">ruvB</name>
    <name type="ordered locus">TWT_269</name>
</gene>
<accession>Q83MZ8</accession>
<reference key="1">
    <citation type="journal article" date="2003" name="Genome Res.">
        <title>Tropheryma whipplei twist: a human pathogenic Actinobacteria with a reduced genome.</title>
        <authorList>
            <person name="Raoult D."/>
            <person name="Ogata H."/>
            <person name="Audic S."/>
            <person name="Robert C."/>
            <person name="Suhre K."/>
            <person name="Drancourt M."/>
            <person name="Claverie J.-M."/>
        </authorList>
    </citation>
    <scope>NUCLEOTIDE SEQUENCE [LARGE SCALE GENOMIC DNA]</scope>
    <source>
        <strain>Twist</strain>
    </source>
</reference>
<comment type="function">
    <text evidence="1">The RuvA-RuvB-RuvC complex processes Holliday junction (HJ) DNA during genetic recombination and DNA repair, while the RuvA-RuvB complex plays an important role in the rescue of blocked DNA replication forks via replication fork reversal (RFR). RuvA specifically binds to HJ cruciform DNA, conferring on it an open structure. The RuvB hexamer acts as an ATP-dependent pump, pulling dsDNA into and through the RuvAB complex. RuvB forms 2 homohexamers on either side of HJ DNA bound by 1 or 2 RuvA tetramers; 4 subunits per hexamer contact DNA at a time. Coordinated motions by a converter formed by DNA-disengaged RuvB subunits stimulates ATP hydrolysis and nucleotide exchange. Immobilization of the converter enables RuvB to convert the ATP-contained energy into a lever motion, pulling 2 nucleotides of DNA out of the RuvA tetramer per ATP hydrolyzed, thus driving DNA branch migration. The RuvB motors rotate together with the DNA substrate, which together with the progressing nucleotide cycle form the mechanistic basis for DNA recombination by continuous HJ branch migration. Branch migration allows RuvC to scan DNA until it finds its consensus sequence, where it cleaves and resolves cruciform DNA.</text>
</comment>
<comment type="catalytic activity">
    <reaction evidence="1">
        <text>ATP + H2O = ADP + phosphate + H(+)</text>
        <dbReference type="Rhea" id="RHEA:13065"/>
        <dbReference type="ChEBI" id="CHEBI:15377"/>
        <dbReference type="ChEBI" id="CHEBI:15378"/>
        <dbReference type="ChEBI" id="CHEBI:30616"/>
        <dbReference type="ChEBI" id="CHEBI:43474"/>
        <dbReference type="ChEBI" id="CHEBI:456216"/>
    </reaction>
</comment>
<comment type="subunit">
    <text evidence="1">Homohexamer. Forms an RuvA(8)-RuvB(12)-Holliday junction (HJ) complex. HJ DNA is sandwiched between 2 RuvA tetramers; dsDNA enters through RuvA and exits via RuvB. An RuvB hexamer assembles on each DNA strand where it exits the tetramer. Each RuvB hexamer is contacted by two RuvA subunits (via domain III) on 2 adjacent RuvB subunits; this complex drives branch migration. In the full resolvosome a probable DNA-RuvA(4)-RuvB(12)-RuvC(2) complex forms which resolves the HJ.</text>
</comment>
<comment type="subcellular location">
    <subcellularLocation>
        <location evidence="1">Cytoplasm</location>
    </subcellularLocation>
</comment>
<comment type="domain">
    <text evidence="1">Has 3 domains, the large (RuvB-L) and small ATPase (RuvB-S) domains and the C-terminal head (RuvB-H) domain. The head domain binds DNA, while the ATPase domains jointly bind ATP, ADP or are empty depending on the state of the subunit in the translocation cycle. During a single DNA translocation step the structure of each domain remains the same, but their relative positions change.</text>
</comment>
<comment type="similarity">
    <text evidence="1">Belongs to the RuvB family.</text>
</comment>
<feature type="chain" id="PRO_0000165625" description="Holliday junction branch migration complex subunit RuvB">
    <location>
        <begin position="1"/>
        <end position="345"/>
    </location>
</feature>
<feature type="region of interest" description="Large ATPase domain (RuvB-L)" evidence="1">
    <location>
        <begin position="3"/>
        <end position="187"/>
    </location>
</feature>
<feature type="region of interest" description="Small ATPAse domain (RuvB-S)" evidence="1">
    <location>
        <begin position="188"/>
        <end position="259"/>
    </location>
</feature>
<feature type="region of interest" description="Head domain (RuvB-H)" evidence="1">
    <location>
        <begin position="262"/>
        <end position="345"/>
    </location>
</feature>
<feature type="binding site" evidence="1">
    <location>
        <position position="26"/>
    </location>
    <ligand>
        <name>ATP</name>
        <dbReference type="ChEBI" id="CHEBI:30616"/>
    </ligand>
</feature>
<feature type="binding site" evidence="1">
    <location>
        <position position="27"/>
    </location>
    <ligand>
        <name>ATP</name>
        <dbReference type="ChEBI" id="CHEBI:30616"/>
    </ligand>
</feature>
<feature type="binding site" evidence="1">
    <location>
        <position position="68"/>
    </location>
    <ligand>
        <name>ATP</name>
        <dbReference type="ChEBI" id="CHEBI:30616"/>
    </ligand>
</feature>
<feature type="binding site" evidence="1">
    <location>
        <position position="71"/>
    </location>
    <ligand>
        <name>ATP</name>
        <dbReference type="ChEBI" id="CHEBI:30616"/>
    </ligand>
</feature>
<feature type="binding site" evidence="1">
    <location>
        <position position="72"/>
    </location>
    <ligand>
        <name>ATP</name>
        <dbReference type="ChEBI" id="CHEBI:30616"/>
    </ligand>
</feature>
<feature type="binding site" evidence="1">
    <location>
        <position position="72"/>
    </location>
    <ligand>
        <name>Mg(2+)</name>
        <dbReference type="ChEBI" id="CHEBI:18420"/>
    </ligand>
</feature>
<feature type="binding site" evidence="1">
    <location>
        <position position="73"/>
    </location>
    <ligand>
        <name>ATP</name>
        <dbReference type="ChEBI" id="CHEBI:30616"/>
    </ligand>
</feature>
<feature type="binding site" evidence="1">
    <location>
        <begin position="134"/>
        <end position="136"/>
    </location>
    <ligand>
        <name>ATP</name>
        <dbReference type="ChEBI" id="CHEBI:30616"/>
    </ligand>
</feature>
<feature type="binding site" evidence="1">
    <location>
        <position position="177"/>
    </location>
    <ligand>
        <name>ATP</name>
        <dbReference type="ChEBI" id="CHEBI:30616"/>
    </ligand>
</feature>
<feature type="binding site" evidence="1">
    <location>
        <position position="187"/>
    </location>
    <ligand>
        <name>ATP</name>
        <dbReference type="ChEBI" id="CHEBI:30616"/>
    </ligand>
</feature>
<feature type="binding site" evidence="1">
    <location>
        <position position="224"/>
    </location>
    <ligand>
        <name>ATP</name>
        <dbReference type="ChEBI" id="CHEBI:30616"/>
    </ligand>
</feature>
<feature type="binding site" evidence="1">
    <location>
        <position position="317"/>
    </location>
    <ligand>
        <name>DNA</name>
        <dbReference type="ChEBI" id="CHEBI:16991"/>
    </ligand>
</feature>
<feature type="binding site" evidence="1">
    <location>
        <position position="322"/>
    </location>
    <ligand>
        <name>DNA</name>
        <dbReference type="ChEBI" id="CHEBI:16991"/>
    </ligand>
</feature>
<evidence type="ECO:0000255" key="1">
    <source>
        <dbReference type="HAMAP-Rule" id="MF_00016"/>
    </source>
</evidence>
<sequence length="345" mass="38012">MPLDILQNRNNLLDVTSDEKQTEGALRPKLLAEFVGQNKVKNQLALLIQAAKIQGRVTDHALLAGPPGLGKTTLAMIVAAECGVSIRMSSGPAIQHAGDLAALLSSLLPGELLFIDEIHRMSRVAEEMLYLAMEDFRIDIMVGKGPGATSVPLELSPFTLVGATTRAGLLPGPLRDRFGFTARLDFYSPEELLQVLIRSARLMEIQYYDDALESIAVRSRGTPRVANRLLRRTRDYLLVSNSSEILSKEIALKAMDVYEVDSLGLDRLDRAVLHAIFDRFSGGPVGIKTLSAYLGEEAETIENSIEPFLVRQGLLVRTPRGRQITDLARKHMGFKEDLSGFELYL</sequence>
<protein>
    <recommendedName>
        <fullName evidence="1">Holliday junction branch migration complex subunit RuvB</fullName>
        <ecNumber evidence="1">3.6.4.-</ecNumber>
    </recommendedName>
</protein>
<organism>
    <name type="scientific">Tropheryma whipplei (strain Twist)</name>
    <name type="common">Whipple's bacillus</name>
    <dbReference type="NCBI Taxonomy" id="203267"/>
    <lineage>
        <taxon>Bacteria</taxon>
        <taxon>Bacillati</taxon>
        <taxon>Actinomycetota</taxon>
        <taxon>Actinomycetes</taxon>
        <taxon>Micrococcales</taxon>
        <taxon>Tropherymataceae</taxon>
        <taxon>Tropheryma</taxon>
    </lineage>
</organism>
<keyword id="KW-0067">ATP-binding</keyword>
<keyword id="KW-0963">Cytoplasm</keyword>
<keyword id="KW-0227">DNA damage</keyword>
<keyword id="KW-0233">DNA recombination</keyword>
<keyword id="KW-0234">DNA repair</keyword>
<keyword id="KW-0238">DNA-binding</keyword>
<keyword id="KW-0378">Hydrolase</keyword>
<keyword id="KW-0547">Nucleotide-binding</keyword>
<keyword id="KW-1185">Reference proteome</keyword>
<name>RUVB_TROWT</name>